<feature type="chain" id="PRO_1000203406" description="N-acetyl-gamma-glutamyl-phosphate reductase">
    <location>
        <begin position="1"/>
        <end position="339"/>
    </location>
</feature>
<feature type="active site" evidence="1">
    <location>
        <position position="145"/>
    </location>
</feature>
<keyword id="KW-0028">Amino-acid biosynthesis</keyword>
<keyword id="KW-0055">Arginine biosynthesis</keyword>
<keyword id="KW-0963">Cytoplasm</keyword>
<keyword id="KW-0521">NADP</keyword>
<keyword id="KW-0560">Oxidoreductase</keyword>
<keyword id="KW-1185">Reference proteome</keyword>
<organism>
    <name type="scientific">Kosmotoga olearia (strain ATCC BAA-1733 / DSM 21960 / TBF 19.5.1)</name>
    <dbReference type="NCBI Taxonomy" id="521045"/>
    <lineage>
        <taxon>Bacteria</taxon>
        <taxon>Thermotogati</taxon>
        <taxon>Thermotogota</taxon>
        <taxon>Thermotogae</taxon>
        <taxon>Kosmotogales</taxon>
        <taxon>Kosmotogaceae</taxon>
        <taxon>Kosmotoga</taxon>
    </lineage>
</organism>
<accession>C5CHW7</accession>
<evidence type="ECO:0000255" key="1">
    <source>
        <dbReference type="HAMAP-Rule" id="MF_00150"/>
    </source>
</evidence>
<dbReference type="EC" id="1.2.1.38" evidence="1"/>
<dbReference type="EMBL" id="CP001634">
    <property type="protein sequence ID" value="ACR78822.1"/>
    <property type="molecule type" value="Genomic_DNA"/>
</dbReference>
<dbReference type="RefSeq" id="WP_012744610.1">
    <property type="nucleotide sequence ID" value="NC_012785.1"/>
</dbReference>
<dbReference type="SMR" id="C5CHW7"/>
<dbReference type="STRING" id="521045.Kole_0094"/>
<dbReference type="KEGG" id="kol:Kole_0094"/>
<dbReference type="eggNOG" id="COG0002">
    <property type="taxonomic scope" value="Bacteria"/>
</dbReference>
<dbReference type="HOGENOM" id="CLU_006384_0_1_0"/>
<dbReference type="OrthoDB" id="9801289at2"/>
<dbReference type="UniPathway" id="UPA00068">
    <property type="reaction ID" value="UER00108"/>
</dbReference>
<dbReference type="Proteomes" id="UP000002382">
    <property type="component" value="Chromosome"/>
</dbReference>
<dbReference type="GO" id="GO:0005737">
    <property type="term" value="C:cytoplasm"/>
    <property type="evidence" value="ECO:0007669"/>
    <property type="project" value="UniProtKB-SubCell"/>
</dbReference>
<dbReference type="GO" id="GO:0003942">
    <property type="term" value="F:N-acetyl-gamma-glutamyl-phosphate reductase activity"/>
    <property type="evidence" value="ECO:0007669"/>
    <property type="project" value="UniProtKB-UniRule"/>
</dbReference>
<dbReference type="GO" id="GO:0051287">
    <property type="term" value="F:NAD binding"/>
    <property type="evidence" value="ECO:0007669"/>
    <property type="project" value="InterPro"/>
</dbReference>
<dbReference type="GO" id="GO:0070401">
    <property type="term" value="F:NADP+ binding"/>
    <property type="evidence" value="ECO:0007669"/>
    <property type="project" value="InterPro"/>
</dbReference>
<dbReference type="GO" id="GO:0006526">
    <property type="term" value="P:L-arginine biosynthetic process"/>
    <property type="evidence" value="ECO:0007669"/>
    <property type="project" value="UniProtKB-UniRule"/>
</dbReference>
<dbReference type="CDD" id="cd23934">
    <property type="entry name" value="AGPR_1_C"/>
    <property type="match status" value="1"/>
</dbReference>
<dbReference type="CDD" id="cd17895">
    <property type="entry name" value="AGPR_1_N"/>
    <property type="match status" value="1"/>
</dbReference>
<dbReference type="FunFam" id="3.30.360.10:FF:000014">
    <property type="entry name" value="N-acetyl-gamma-glutamyl-phosphate reductase"/>
    <property type="match status" value="1"/>
</dbReference>
<dbReference type="Gene3D" id="3.30.360.10">
    <property type="entry name" value="Dihydrodipicolinate Reductase, domain 2"/>
    <property type="match status" value="1"/>
</dbReference>
<dbReference type="Gene3D" id="3.40.50.720">
    <property type="entry name" value="NAD(P)-binding Rossmann-like Domain"/>
    <property type="match status" value="1"/>
</dbReference>
<dbReference type="HAMAP" id="MF_00150">
    <property type="entry name" value="ArgC_type1"/>
    <property type="match status" value="1"/>
</dbReference>
<dbReference type="InterPro" id="IPR000706">
    <property type="entry name" value="AGPR_type-1"/>
</dbReference>
<dbReference type="InterPro" id="IPR036291">
    <property type="entry name" value="NAD(P)-bd_dom_sf"/>
</dbReference>
<dbReference type="InterPro" id="IPR050085">
    <property type="entry name" value="NAGSA_dehydrogenase"/>
</dbReference>
<dbReference type="InterPro" id="IPR000534">
    <property type="entry name" value="Semialdehyde_DH_NAD-bd"/>
</dbReference>
<dbReference type="NCBIfam" id="TIGR01850">
    <property type="entry name" value="argC"/>
    <property type="match status" value="1"/>
</dbReference>
<dbReference type="PANTHER" id="PTHR32338:SF10">
    <property type="entry name" value="N-ACETYL-GAMMA-GLUTAMYL-PHOSPHATE REDUCTASE, CHLOROPLASTIC-RELATED"/>
    <property type="match status" value="1"/>
</dbReference>
<dbReference type="PANTHER" id="PTHR32338">
    <property type="entry name" value="N-ACETYL-GAMMA-GLUTAMYL-PHOSPHATE REDUCTASE, CHLOROPLASTIC-RELATED-RELATED"/>
    <property type="match status" value="1"/>
</dbReference>
<dbReference type="Pfam" id="PF01118">
    <property type="entry name" value="Semialdhyde_dh"/>
    <property type="match status" value="1"/>
</dbReference>
<dbReference type="Pfam" id="PF22698">
    <property type="entry name" value="Semialdhyde_dhC_1"/>
    <property type="match status" value="1"/>
</dbReference>
<dbReference type="SMART" id="SM00859">
    <property type="entry name" value="Semialdhyde_dh"/>
    <property type="match status" value="1"/>
</dbReference>
<dbReference type="SUPFAM" id="SSF55347">
    <property type="entry name" value="Glyceraldehyde-3-phosphate dehydrogenase-like, C-terminal domain"/>
    <property type="match status" value="1"/>
</dbReference>
<dbReference type="SUPFAM" id="SSF51735">
    <property type="entry name" value="NAD(P)-binding Rossmann-fold domains"/>
    <property type="match status" value="1"/>
</dbReference>
<reference key="1">
    <citation type="submission" date="2009-06" db="EMBL/GenBank/DDBJ databases">
        <title>Complete sequence of Thermotogales bacterium TBF 19.5.1.</title>
        <authorList>
            <consortium name="US DOE Joint Genome Institute"/>
            <person name="Lucas S."/>
            <person name="Copeland A."/>
            <person name="Lapidus A."/>
            <person name="Glavina del Rio T."/>
            <person name="Tice H."/>
            <person name="Bruce D."/>
            <person name="Goodwin L."/>
            <person name="Pitluck S."/>
            <person name="Chertkov O."/>
            <person name="Brettin T."/>
            <person name="Detter J.C."/>
            <person name="Han C."/>
            <person name="Schmutz J."/>
            <person name="Larimer F."/>
            <person name="Land M."/>
            <person name="Hauser L."/>
            <person name="Kyrpides N."/>
            <person name="Ovchinnikova G."/>
            <person name="Noll K."/>
        </authorList>
    </citation>
    <scope>NUCLEOTIDE SEQUENCE [LARGE SCALE GENOMIC DNA]</scope>
    <source>
        <strain>ATCC BAA-1733 / DSM 21960 / TBF 19.5.1</strain>
    </source>
</reference>
<sequence length="339" mass="37999">MIRVGIIGATGYTGLELVRILTNHPDVKITFLSSRSFAGKKLNDVYPFSLKNETLEEIDPEKISKNCDVVFTALPAGVSYEIARKLKDVRIIDLGADFRFDDPAVYEEWYSKKLPDYDPTERVYGLTELYREKIKNARFVGNPGCYPTSVLLATAPLLKNGSLDEETIIVDSKSGVSGAGKKESIDYSFSELSGSLKAYNVSKHRHVPEMEQEMSKLCGKRLKLVFTPHLVPMVRGILSTIYVKTDLSLDEVYELYREYYGKEKFIHVLQPGVYPSTKWTYGSNHAFISMAKDDRTDTLILISVIDNLVKGASGQAVQNMNVMFSLAEDAGLSFNPIYP</sequence>
<name>ARGC_KOSOT</name>
<proteinExistence type="inferred from homology"/>
<protein>
    <recommendedName>
        <fullName evidence="1">N-acetyl-gamma-glutamyl-phosphate reductase</fullName>
        <shortName evidence="1">AGPR</shortName>
        <ecNumber evidence="1">1.2.1.38</ecNumber>
    </recommendedName>
    <alternativeName>
        <fullName evidence="1">N-acetyl-glutamate semialdehyde dehydrogenase</fullName>
        <shortName evidence="1">NAGSA dehydrogenase</shortName>
    </alternativeName>
</protein>
<comment type="function">
    <text evidence="1">Catalyzes the NADPH-dependent reduction of N-acetyl-5-glutamyl phosphate to yield N-acetyl-L-glutamate 5-semialdehyde.</text>
</comment>
<comment type="catalytic activity">
    <reaction evidence="1">
        <text>N-acetyl-L-glutamate 5-semialdehyde + phosphate + NADP(+) = N-acetyl-L-glutamyl 5-phosphate + NADPH + H(+)</text>
        <dbReference type="Rhea" id="RHEA:21588"/>
        <dbReference type="ChEBI" id="CHEBI:15378"/>
        <dbReference type="ChEBI" id="CHEBI:29123"/>
        <dbReference type="ChEBI" id="CHEBI:43474"/>
        <dbReference type="ChEBI" id="CHEBI:57783"/>
        <dbReference type="ChEBI" id="CHEBI:57936"/>
        <dbReference type="ChEBI" id="CHEBI:58349"/>
        <dbReference type="EC" id="1.2.1.38"/>
    </reaction>
</comment>
<comment type="pathway">
    <text evidence="1">Amino-acid biosynthesis; L-arginine biosynthesis; N(2)-acetyl-L-ornithine from L-glutamate: step 3/4.</text>
</comment>
<comment type="subcellular location">
    <subcellularLocation>
        <location evidence="1">Cytoplasm</location>
    </subcellularLocation>
</comment>
<comment type="similarity">
    <text evidence="1">Belongs to the NAGSA dehydrogenase family. Type 1 subfamily.</text>
</comment>
<gene>
    <name evidence="1" type="primary">argC</name>
    <name type="ordered locus">Kole_0094</name>
</gene>